<sequence length="466" mass="51681">MVRSVAWAGFMVLLMIPWGSAAKLVCYFTNWAQYRQGEARFLPKDLDPSLCTHLIYAFAGMTNHQLSTTEWNDETLYQEFNGLKKMNPKLKTLLAIGGWNFGTQKFTDMVATANNRQTFVNSAIRFLRKYSFDGLDLDWEYPGSQGSPAVDKERFTTLVQDLANAFQQEAQTSGKERLLLSAAVPAGQTYVDAGYEVDKIAQNLDFVNLMAYDFHGSWEKVTGHNSPLYKRQEESGAAASLNVDAAVQQWLQKGTPASKLILGMPTYGRSFTLASSSDTRVGAPATGSGTPGPFTKEGGMLAYYEVCSWKGATKQRIQDQKVPYIFRDNQWVGFDDVESFKTKVSYLKQKGLGGAMVWALDLDDFAGFSCNQGRYPLIQTLRQELSLPYLPSGTPELEVPKPGQPSEPEHGPSPGQDTFCQGKADGLYPNPRERSSFYSCAAGRLFQQSCPTGLVFSNSCKCCTWN</sequence>
<keyword id="KW-0002">3D-structure</keyword>
<keyword id="KW-0025">Alternative splicing</keyword>
<keyword id="KW-0119">Carbohydrate metabolism</keyword>
<keyword id="KW-0146">Chitin degradation</keyword>
<keyword id="KW-0147">Chitin-binding</keyword>
<keyword id="KW-0903">Direct protein sequencing</keyword>
<keyword id="KW-1015">Disulfide bond</keyword>
<keyword id="KW-0325">Glycoprotein</keyword>
<keyword id="KW-0326">Glycosidase</keyword>
<keyword id="KW-0378">Hydrolase</keyword>
<keyword id="KW-0458">Lysosome</keyword>
<keyword id="KW-0624">Polysaccharide degradation</keyword>
<keyword id="KW-1267">Proteomics identification</keyword>
<keyword id="KW-1185">Reference proteome</keyword>
<keyword id="KW-0964">Secreted</keyword>
<keyword id="KW-0732">Signal</keyword>
<feature type="signal peptide" evidence="12">
    <location>
        <begin position="1"/>
        <end position="21"/>
    </location>
</feature>
<feature type="chain" id="PRO_0000011941" description="Chitotriosidase-1">
    <location>
        <begin position="22"/>
        <end position="466"/>
    </location>
</feature>
<feature type="domain" description="GH18" evidence="2">
    <location>
        <begin position="22"/>
        <end position="388"/>
    </location>
</feature>
<feature type="domain" description="Chitin-binding type-2" evidence="1">
    <location>
        <begin position="417"/>
        <end position="466"/>
    </location>
</feature>
<feature type="region of interest" description="Disordered" evidence="3">
    <location>
        <begin position="392"/>
        <end position="424"/>
    </location>
</feature>
<feature type="active site" description="Proton donor" evidence="2">
    <location>
        <position position="140"/>
    </location>
</feature>
<feature type="binding site" evidence="2">
    <location>
        <begin position="70"/>
        <end position="71"/>
    </location>
    <ligand>
        <name>chitin</name>
        <dbReference type="ChEBI" id="CHEBI:17029"/>
    </ligand>
</feature>
<feature type="binding site" evidence="2">
    <location>
        <begin position="97"/>
        <end position="100"/>
    </location>
    <ligand>
        <name>chitin</name>
        <dbReference type="ChEBI" id="CHEBI:17029"/>
    </ligand>
</feature>
<feature type="binding site" evidence="2">
    <location>
        <position position="141"/>
    </location>
    <ligand>
        <name>chitin</name>
        <dbReference type="ChEBI" id="CHEBI:17029"/>
    </ligand>
</feature>
<feature type="binding site" evidence="2">
    <location>
        <begin position="210"/>
        <end position="213"/>
    </location>
    <ligand>
        <name>chitin</name>
        <dbReference type="ChEBI" id="CHEBI:17029"/>
    </ligand>
</feature>
<feature type="binding site" evidence="2">
    <location>
        <position position="358"/>
    </location>
    <ligand>
        <name>chitin</name>
        <dbReference type="ChEBI" id="CHEBI:17029"/>
    </ligand>
</feature>
<feature type="glycosylation site" description="N-linked (GlcNAc...) asparagine; in variant S-102" evidence="10">
    <location>
        <position position="100"/>
    </location>
</feature>
<feature type="disulfide bond" evidence="2 4">
    <location>
        <begin position="26"/>
        <end position="51"/>
    </location>
</feature>
<feature type="disulfide bond" evidence="1 4">
    <location>
        <begin position="307"/>
        <end position="370"/>
    </location>
</feature>
<feature type="disulfide bond" evidence="1">
    <location>
        <begin position="450"/>
        <end position="463"/>
    </location>
</feature>
<feature type="splice variant" id="VSP_044816" description="In isoform 4." evidence="14">
    <location>
        <begin position="87"/>
        <end position="105"/>
    </location>
</feature>
<feature type="splice variant" id="VSP_008633" description="In isoform 3." evidence="16">
    <location>
        <begin position="344"/>
        <end position="372"/>
    </location>
</feature>
<feature type="splice variant" id="VSP_008631" description="In isoform 2." evidence="15">
    <original>SL</original>
    <variation>NG</variation>
    <location>
        <begin position="386"/>
        <end position="387"/>
    </location>
</feature>
<feature type="splice variant" id="VSP_008632" description="In isoform 2." evidence="15">
    <location>
        <begin position="388"/>
        <end position="466"/>
    </location>
</feature>
<feature type="sequence variant" id="VAR_049190" description="In dbSNP:rs35920428.">
    <original>R</original>
    <variation>H</variation>
    <location>
        <position position="40"/>
    </location>
</feature>
<feature type="sequence variant" id="VAR_065914" description="Rare variant detected in patients with Gaucher disease type 1; dbSNP:rs137852607." evidence="9">
    <original>E</original>
    <variation>K</variation>
    <location>
        <position position="74"/>
    </location>
</feature>
<feature type="sequence variant" id="VAR_022138" description="Common variant detected in patients with Gaucher disease type 1 as well as healthy individuals; slightly reduced activity towards 4-methylumbelliferyl-chitotrioside but no effect on activity towards 4-methylumbelliferyl-deoxychitobioside; dbSNP:rs2297950." evidence="7 9 10">
    <original>G</original>
    <variation>S</variation>
    <location>
        <position position="102"/>
    </location>
</feature>
<feature type="sequence variant" id="VAR_049191" description="In dbSNP:rs12562058.">
    <original>Q</original>
    <variation>H</variation>
    <location>
        <position position="171"/>
    </location>
</feature>
<feature type="sequence variant" id="VAR_024458" description="In dbSNP:rs1065761." evidence="6 7">
    <original>A</original>
    <variation>G</variation>
    <location>
        <position position="442"/>
    </location>
</feature>
<feature type="strand" evidence="18">
    <location>
        <begin position="23"/>
        <end position="29"/>
    </location>
</feature>
<feature type="helix" evidence="18">
    <location>
        <begin position="32"/>
        <end position="34"/>
    </location>
</feature>
<feature type="helix" evidence="18">
    <location>
        <begin position="37"/>
        <end position="39"/>
    </location>
</feature>
<feature type="helix" evidence="18">
    <location>
        <begin position="43"/>
        <end position="45"/>
    </location>
</feature>
<feature type="turn" evidence="19">
    <location>
        <begin position="48"/>
        <end position="50"/>
    </location>
</feature>
<feature type="strand" evidence="18">
    <location>
        <begin position="52"/>
        <end position="62"/>
    </location>
</feature>
<feature type="strand" evidence="18">
    <location>
        <begin position="65"/>
        <end position="67"/>
    </location>
</feature>
<feature type="helix" evidence="18">
    <location>
        <begin position="73"/>
        <end position="86"/>
    </location>
</feature>
<feature type="strand" evidence="18">
    <location>
        <begin position="91"/>
        <end position="97"/>
    </location>
</feature>
<feature type="turn" evidence="18">
    <location>
        <begin position="99"/>
        <end position="101"/>
    </location>
</feature>
<feature type="helix" evidence="18">
    <location>
        <begin position="104"/>
        <end position="110"/>
    </location>
</feature>
<feature type="helix" evidence="18">
    <location>
        <begin position="113"/>
        <end position="130"/>
    </location>
</feature>
<feature type="strand" evidence="18">
    <location>
        <begin position="133"/>
        <end position="138"/>
    </location>
</feature>
<feature type="strand" evidence="17">
    <location>
        <begin position="144"/>
        <end position="146"/>
    </location>
</feature>
<feature type="helix" evidence="18">
    <location>
        <begin position="151"/>
        <end position="173"/>
    </location>
</feature>
<feature type="strand" evidence="18">
    <location>
        <begin position="179"/>
        <end position="185"/>
    </location>
</feature>
<feature type="helix" evidence="18">
    <location>
        <begin position="188"/>
        <end position="194"/>
    </location>
</feature>
<feature type="helix" evidence="18">
    <location>
        <begin position="197"/>
        <end position="201"/>
    </location>
</feature>
<feature type="strand" evidence="18">
    <location>
        <begin position="205"/>
        <end position="210"/>
    </location>
</feature>
<feature type="strand" evidence="18">
    <location>
        <begin position="219"/>
        <end position="221"/>
    </location>
</feature>
<feature type="helix" evidence="18">
    <location>
        <begin position="236"/>
        <end position="240"/>
    </location>
</feature>
<feature type="helix" evidence="18">
    <location>
        <begin position="243"/>
        <end position="252"/>
    </location>
</feature>
<feature type="helix" evidence="18">
    <location>
        <begin position="257"/>
        <end position="259"/>
    </location>
</feature>
<feature type="strand" evidence="18">
    <location>
        <begin position="260"/>
        <end position="274"/>
    </location>
</feature>
<feature type="strand" evidence="18">
    <location>
        <begin position="284"/>
        <end position="288"/>
    </location>
</feature>
<feature type="turn" evidence="18">
    <location>
        <begin position="293"/>
        <end position="295"/>
    </location>
</feature>
<feature type="strand" evidence="18">
    <location>
        <begin position="300"/>
        <end position="302"/>
    </location>
</feature>
<feature type="helix" evidence="18">
    <location>
        <begin position="303"/>
        <end position="306"/>
    </location>
</feature>
<feature type="strand" evidence="18">
    <location>
        <begin position="313"/>
        <end position="317"/>
    </location>
</feature>
<feature type="turn" evidence="18">
    <location>
        <begin position="318"/>
        <end position="321"/>
    </location>
</feature>
<feature type="strand" evidence="18">
    <location>
        <begin position="322"/>
        <end position="327"/>
    </location>
</feature>
<feature type="strand" evidence="18">
    <location>
        <begin position="330"/>
        <end position="333"/>
    </location>
</feature>
<feature type="helix" evidence="18">
    <location>
        <begin position="337"/>
        <end position="349"/>
    </location>
</feature>
<feature type="strand" evidence="18">
    <location>
        <begin position="353"/>
        <end position="358"/>
    </location>
</feature>
<feature type="helix" evidence="18">
    <location>
        <begin position="360"/>
        <end position="362"/>
    </location>
</feature>
<feature type="strand" evidence="18">
    <location>
        <begin position="367"/>
        <end position="372"/>
    </location>
</feature>
<feature type="helix" evidence="18">
    <location>
        <begin position="376"/>
        <end position="384"/>
    </location>
</feature>
<feature type="turn" evidence="20">
    <location>
        <begin position="419"/>
        <end position="422"/>
    </location>
</feature>
<feature type="strand" evidence="20">
    <location>
        <begin position="425"/>
        <end position="430"/>
    </location>
</feature>
<feature type="strand" evidence="20">
    <location>
        <begin position="433"/>
        <end position="441"/>
    </location>
</feature>
<feature type="strand" evidence="20">
    <location>
        <begin position="444"/>
        <end position="449"/>
    </location>
</feature>
<feature type="strand" evidence="20">
    <location>
        <begin position="455"/>
        <end position="457"/>
    </location>
</feature>
<feature type="turn" evidence="20">
    <location>
        <begin position="458"/>
        <end position="461"/>
    </location>
</feature>
<feature type="strand" evidence="20">
    <location>
        <begin position="462"/>
        <end position="464"/>
    </location>
</feature>
<gene>
    <name type="primary">CHIT1</name>
</gene>
<organism>
    <name type="scientific">Homo sapiens</name>
    <name type="common">Human</name>
    <dbReference type="NCBI Taxonomy" id="9606"/>
    <lineage>
        <taxon>Eukaryota</taxon>
        <taxon>Metazoa</taxon>
        <taxon>Chordata</taxon>
        <taxon>Craniata</taxon>
        <taxon>Vertebrata</taxon>
        <taxon>Euteleostomi</taxon>
        <taxon>Mammalia</taxon>
        <taxon>Eutheria</taxon>
        <taxon>Euarchontoglires</taxon>
        <taxon>Primates</taxon>
        <taxon>Haplorrhini</taxon>
        <taxon>Catarrhini</taxon>
        <taxon>Hominidae</taxon>
        <taxon>Homo</taxon>
    </lineage>
</organism>
<reference key="1">
    <citation type="journal article" date="1995" name="J. Biol. Chem.">
        <title>Cloning of a cDNA encoding chitotriosidase, a human chitinase produced by macrophages.</title>
        <authorList>
            <person name="Boot R.G."/>
            <person name="Renkema G.H."/>
            <person name="Strijland A."/>
            <person name="van Zonneveld A.J."/>
            <person name="Aerts J.M.F.G."/>
        </authorList>
    </citation>
    <scope>NUCLEOTIDE SEQUENCE [MRNA] (ISOFORMS 1 AND 2)</scope>
    <scope>FUNCTION</scope>
    <scope>SUBCELLULAR LOCATION</scope>
    <source>
        <tissue>Macrophage</tissue>
    </source>
</reference>
<reference key="2">
    <citation type="journal article" date="2004" name="Nat. Genet.">
        <title>Complete sequencing and characterization of 21,243 full-length human cDNAs.</title>
        <authorList>
            <person name="Ota T."/>
            <person name="Suzuki Y."/>
            <person name="Nishikawa T."/>
            <person name="Otsuki T."/>
            <person name="Sugiyama T."/>
            <person name="Irie R."/>
            <person name="Wakamatsu A."/>
            <person name="Hayashi K."/>
            <person name="Sato H."/>
            <person name="Nagai K."/>
            <person name="Kimura K."/>
            <person name="Makita H."/>
            <person name="Sekine M."/>
            <person name="Obayashi M."/>
            <person name="Nishi T."/>
            <person name="Shibahara T."/>
            <person name="Tanaka T."/>
            <person name="Ishii S."/>
            <person name="Yamamoto J."/>
            <person name="Saito K."/>
            <person name="Kawai Y."/>
            <person name="Isono Y."/>
            <person name="Nakamura Y."/>
            <person name="Nagahari K."/>
            <person name="Murakami K."/>
            <person name="Yasuda T."/>
            <person name="Iwayanagi T."/>
            <person name="Wagatsuma M."/>
            <person name="Shiratori A."/>
            <person name="Sudo H."/>
            <person name="Hosoiri T."/>
            <person name="Kaku Y."/>
            <person name="Kodaira H."/>
            <person name="Kondo H."/>
            <person name="Sugawara M."/>
            <person name="Takahashi M."/>
            <person name="Kanda K."/>
            <person name="Yokoi T."/>
            <person name="Furuya T."/>
            <person name="Kikkawa E."/>
            <person name="Omura Y."/>
            <person name="Abe K."/>
            <person name="Kamihara K."/>
            <person name="Katsuta N."/>
            <person name="Sato K."/>
            <person name="Tanikawa M."/>
            <person name="Yamazaki M."/>
            <person name="Ninomiya K."/>
            <person name="Ishibashi T."/>
            <person name="Yamashita H."/>
            <person name="Murakawa K."/>
            <person name="Fujimori K."/>
            <person name="Tanai H."/>
            <person name="Kimata M."/>
            <person name="Watanabe M."/>
            <person name="Hiraoka S."/>
            <person name="Chiba Y."/>
            <person name="Ishida S."/>
            <person name="Ono Y."/>
            <person name="Takiguchi S."/>
            <person name="Watanabe S."/>
            <person name="Yosida M."/>
            <person name="Hotuta T."/>
            <person name="Kusano J."/>
            <person name="Kanehori K."/>
            <person name="Takahashi-Fujii A."/>
            <person name="Hara H."/>
            <person name="Tanase T.-O."/>
            <person name="Nomura Y."/>
            <person name="Togiya S."/>
            <person name="Komai F."/>
            <person name="Hara R."/>
            <person name="Takeuchi K."/>
            <person name="Arita M."/>
            <person name="Imose N."/>
            <person name="Musashino K."/>
            <person name="Yuuki H."/>
            <person name="Oshima A."/>
            <person name="Sasaki N."/>
            <person name="Aotsuka S."/>
            <person name="Yoshikawa Y."/>
            <person name="Matsunawa H."/>
            <person name="Ichihara T."/>
            <person name="Shiohata N."/>
            <person name="Sano S."/>
            <person name="Moriya S."/>
            <person name="Momiyama H."/>
            <person name="Satoh N."/>
            <person name="Takami S."/>
            <person name="Terashima Y."/>
            <person name="Suzuki O."/>
            <person name="Nakagawa S."/>
            <person name="Senoh A."/>
            <person name="Mizoguchi H."/>
            <person name="Goto Y."/>
            <person name="Shimizu F."/>
            <person name="Wakebe H."/>
            <person name="Hishigaki H."/>
            <person name="Watanabe T."/>
            <person name="Sugiyama A."/>
            <person name="Takemoto M."/>
            <person name="Kawakami B."/>
            <person name="Yamazaki M."/>
            <person name="Watanabe K."/>
            <person name="Kumagai A."/>
            <person name="Itakura S."/>
            <person name="Fukuzumi Y."/>
            <person name="Fujimori Y."/>
            <person name="Komiyama M."/>
            <person name="Tashiro H."/>
            <person name="Tanigami A."/>
            <person name="Fujiwara T."/>
            <person name="Ono T."/>
            <person name="Yamada K."/>
            <person name="Fujii Y."/>
            <person name="Ozaki K."/>
            <person name="Hirao M."/>
            <person name="Ohmori Y."/>
            <person name="Kawabata A."/>
            <person name="Hikiji T."/>
            <person name="Kobatake N."/>
            <person name="Inagaki H."/>
            <person name="Ikema Y."/>
            <person name="Okamoto S."/>
            <person name="Okitani R."/>
            <person name="Kawakami T."/>
            <person name="Noguchi S."/>
            <person name="Itoh T."/>
            <person name="Shigeta K."/>
            <person name="Senba T."/>
            <person name="Matsumura K."/>
            <person name="Nakajima Y."/>
            <person name="Mizuno T."/>
            <person name="Morinaga M."/>
            <person name="Sasaki M."/>
            <person name="Togashi T."/>
            <person name="Oyama M."/>
            <person name="Hata H."/>
            <person name="Watanabe M."/>
            <person name="Komatsu T."/>
            <person name="Mizushima-Sugano J."/>
            <person name="Satoh T."/>
            <person name="Shirai Y."/>
            <person name="Takahashi Y."/>
            <person name="Nakagawa K."/>
            <person name="Okumura K."/>
            <person name="Nagase T."/>
            <person name="Nomura N."/>
            <person name="Kikuchi H."/>
            <person name="Masuho Y."/>
            <person name="Yamashita R."/>
            <person name="Nakai K."/>
            <person name="Yada T."/>
            <person name="Nakamura Y."/>
            <person name="Ohara O."/>
            <person name="Isogai T."/>
            <person name="Sugano S."/>
        </authorList>
    </citation>
    <scope>NUCLEOTIDE SEQUENCE [LARGE SCALE MRNA] (ISOFORM 4)</scope>
    <scope>VARIANT GLY-442</scope>
</reference>
<reference key="3">
    <citation type="journal article" date="2006" name="Nature">
        <title>The DNA sequence and biological annotation of human chromosome 1.</title>
        <authorList>
            <person name="Gregory S.G."/>
            <person name="Barlow K.F."/>
            <person name="McLay K.E."/>
            <person name="Kaul R."/>
            <person name="Swarbreck D."/>
            <person name="Dunham A."/>
            <person name="Scott C.E."/>
            <person name="Howe K.L."/>
            <person name="Woodfine K."/>
            <person name="Spencer C.C.A."/>
            <person name="Jones M.C."/>
            <person name="Gillson C."/>
            <person name="Searle S."/>
            <person name="Zhou Y."/>
            <person name="Kokocinski F."/>
            <person name="McDonald L."/>
            <person name="Evans R."/>
            <person name="Phillips K."/>
            <person name="Atkinson A."/>
            <person name="Cooper R."/>
            <person name="Jones C."/>
            <person name="Hall R.E."/>
            <person name="Andrews T.D."/>
            <person name="Lloyd C."/>
            <person name="Ainscough R."/>
            <person name="Almeida J.P."/>
            <person name="Ambrose K.D."/>
            <person name="Anderson F."/>
            <person name="Andrew R.W."/>
            <person name="Ashwell R.I.S."/>
            <person name="Aubin K."/>
            <person name="Babbage A.K."/>
            <person name="Bagguley C.L."/>
            <person name="Bailey J."/>
            <person name="Beasley H."/>
            <person name="Bethel G."/>
            <person name="Bird C.P."/>
            <person name="Bray-Allen S."/>
            <person name="Brown J.Y."/>
            <person name="Brown A.J."/>
            <person name="Buckley D."/>
            <person name="Burton J."/>
            <person name="Bye J."/>
            <person name="Carder C."/>
            <person name="Chapman J.C."/>
            <person name="Clark S.Y."/>
            <person name="Clarke G."/>
            <person name="Clee C."/>
            <person name="Cobley V."/>
            <person name="Collier R.E."/>
            <person name="Corby N."/>
            <person name="Coville G.J."/>
            <person name="Davies J."/>
            <person name="Deadman R."/>
            <person name="Dunn M."/>
            <person name="Earthrowl M."/>
            <person name="Ellington A.G."/>
            <person name="Errington H."/>
            <person name="Frankish A."/>
            <person name="Frankland J."/>
            <person name="French L."/>
            <person name="Garner P."/>
            <person name="Garnett J."/>
            <person name="Gay L."/>
            <person name="Ghori M.R.J."/>
            <person name="Gibson R."/>
            <person name="Gilby L.M."/>
            <person name="Gillett W."/>
            <person name="Glithero R.J."/>
            <person name="Grafham D.V."/>
            <person name="Griffiths C."/>
            <person name="Griffiths-Jones S."/>
            <person name="Grocock R."/>
            <person name="Hammond S."/>
            <person name="Harrison E.S.I."/>
            <person name="Hart E."/>
            <person name="Haugen E."/>
            <person name="Heath P.D."/>
            <person name="Holmes S."/>
            <person name="Holt K."/>
            <person name="Howden P.J."/>
            <person name="Hunt A.R."/>
            <person name="Hunt S.E."/>
            <person name="Hunter G."/>
            <person name="Isherwood J."/>
            <person name="James R."/>
            <person name="Johnson C."/>
            <person name="Johnson D."/>
            <person name="Joy A."/>
            <person name="Kay M."/>
            <person name="Kershaw J.K."/>
            <person name="Kibukawa M."/>
            <person name="Kimberley A.M."/>
            <person name="King A."/>
            <person name="Knights A.J."/>
            <person name="Lad H."/>
            <person name="Laird G."/>
            <person name="Lawlor S."/>
            <person name="Leongamornlert D.A."/>
            <person name="Lloyd D.M."/>
            <person name="Loveland J."/>
            <person name="Lovell J."/>
            <person name="Lush M.J."/>
            <person name="Lyne R."/>
            <person name="Martin S."/>
            <person name="Mashreghi-Mohammadi M."/>
            <person name="Matthews L."/>
            <person name="Matthews N.S.W."/>
            <person name="McLaren S."/>
            <person name="Milne S."/>
            <person name="Mistry S."/>
            <person name="Moore M.J.F."/>
            <person name="Nickerson T."/>
            <person name="O'Dell C.N."/>
            <person name="Oliver K."/>
            <person name="Palmeiri A."/>
            <person name="Palmer S.A."/>
            <person name="Parker A."/>
            <person name="Patel D."/>
            <person name="Pearce A.V."/>
            <person name="Peck A.I."/>
            <person name="Pelan S."/>
            <person name="Phelps K."/>
            <person name="Phillimore B.J."/>
            <person name="Plumb R."/>
            <person name="Rajan J."/>
            <person name="Raymond C."/>
            <person name="Rouse G."/>
            <person name="Saenphimmachak C."/>
            <person name="Sehra H.K."/>
            <person name="Sheridan E."/>
            <person name="Shownkeen R."/>
            <person name="Sims S."/>
            <person name="Skuce C.D."/>
            <person name="Smith M."/>
            <person name="Steward C."/>
            <person name="Subramanian S."/>
            <person name="Sycamore N."/>
            <person name="Tracey A."/>
            <person name="Tromans A."/>
            <person name="Van Helmond Z."/>
            <person name="Wall M."/>
            <person name="Wallis J.M."/>
            <person name="White S."/>
            <person name="Whitehead S.L."/>
            <person name="Wilkinson J.E."/>
            <person name="Willey D.L."/>
            <person name="Williams H."/>
            <person name="Wilming L."/>
            <person name="Wray P.W."/>
            <person name="Wu Z."/>
            <person name="Coulson A."/>
            <person name="Vaudin M."/>
            <person name="Sulston J.E."/>
            <person name="Durbin R.M."/>
            <person name="Hubbard T."/>
            <person name="Wooster R."/>
            <person name="Dunham I."/>
            <person name="Carter N.P."/>
            <person name="McVean G."/>
            <person name="Ross M.T."/>
            <person name="Harrow J."/>
            <person name="Olson M.V."/>
            <person name="Beck S."/>
            <person name="Rogers J."/>
            <person name="Bentley D.R."/>
        </authorList>
    </citation>
    <scope>NUCLEOTIDE SEQUENCE [LARGE SCALE GENOMIC DNA]</scope>
</reference>
<reference key="4">
    <citation type="journal article" date="2004" name="Genome Res.">
        <title>The status, quality, and expansion of the NIH full-length cDNA project: the Mammalian Gene Collection (MGC).</title>
        <authorList>
            <consortium name="The MGC Project Team"/>
        </authorList>
    </citation>
    <scope>NUCLEOTIDE SEQUENCE [LARGE SCALE MRNA] (ISOFORM 1)</scope>
    <scope>VARIANTS SER-102 AND GLY-442</scope>
</reference>
<reference key="5">
    <citation type="journal article" date="1995" name="J. Biol. Chem.">
        <title>Purification and characterization of human chitotriosidase, a novel member of the chitinase family of proteins.</title>
        <authorList>
            <person name="Renkema G.H."/>
            <person name="Boot R.G."/>
            <person name="Muijsers A.O."/>
            <person name="Donker-Koopman W.E."/>
            <person name="Aerts J.M.F.G."/>
        </authorList>
    </citation>
    <scope>PROTEIN SEQUENCE OF 22-43 AND 178-198</scope>
    <scope>FUNCTION</scope>
    <scope>CATALYTIC ACTIVITY</scope>
    <scope>TISSUE SPECIFICITY</scope>
    <source>
        <tissue>Spleen</tissue>
    </source>
</reference>
<reference key="6">
    <citation type="journal article" date="1998" name="J. Biol. Chem.">
        <title>The human chitotriosidase gene. Nature of inherited enzyme deficiency.</title>
        <authorList>
            <person name="Boot R.G."/>
            <person name="Renkema G.H."/>
            <person name="Verhoek M."/>
            <person name="Strijland A."/>
            <person name="Bliek J."/>
            <person name="de Meulemeester T.M.A.M.O."/>
            <person name="Mannens M.M.A.M."/>
            <person name="Aerts J.M.F.G."/>
        </authorList>
    </citation>
    <scope>POLYMORPHISM</scope>
    <scope>FUNCTION (ISOFORM 3)</scope>
</reference>
<reference key="7">
    <citation type="journal article" date="2002" name="J. Biol. Chem.">
        <title>Structure of human chitotriosidase. Implications for specific inhibitor design and function of mammalian chitinase-like lectins.</title>
        <authorList>
            <person name="Fusetti F."/>
            <person name="von Moeller H."/>
            <person name="Houston D."/>
            <person name="Rozeboom H.J."/>
            <person name="Dijkstra B.W."/>
            <person name="Boot R.G."/>
            <person name="Aerts J.M.F.G."/>
            <person name="van Aalten D.M.F."/>
        </authorList>
    </citation>
    <scope>X-RAY CRYSTALLOGRAPHY (2.1 ANGSTROMS) OF 22-386 IN COMPLEX WITH CHITOBIOSE AND ALLOSAMIDIN</scope>
    <scope>SUBCELLULAR LOCATION</scope>
    <scope>DISULFIDE BONDS</scope>
</reference>
<reference key="8">
    <citation type="journal article" date="2003" name="J. Biol. Chem.">
        <title>Crystal structures of allosamidin derivatives in complex with human macrophage chitinase.</title>
        <authorList>
            <person name="Rao F.V."/>
            <person name="Houston D.R."/>
            <person name="Boot R.G."/>
            <person name="Aerts J.M."/>
            <person name="Sakuda S."/>
            <person name="van Aalten D.M."/>
        </authorList>
    </citation>
    <scope>X-RAY CRYSTALLOGRAPHY (1.85 ANGSTROMS) OF 22-385 IN COMPLEX WITH ALLOSAMIDIN</scope>
</reference>
<reference key="9">
    <citation type="journal article" date="2005" name="Chem. Biol.">
        <title>Specificity and affinity of natural product cyclopentapeptide inhibitors against A. fumigatus, human, and bacterial chitinases.</title>
        <authorList>
            <person name="Rao F.V."/>
            <person name="Houston D.R."/>
            <person name="Boot R.G."/>
            <person name="Aerts J.M."/>
            <person name="Hodkinson M."/>
            <person name="Adams D.J."/>
            <person name="Shiomi K."/>
            <person name="Omura S."/>
            <person name="van Aalten D.M."/>
        </authorList>
    </citation>
    <scope>X-RAY CRYSTALLOGRAPHY (1.65 ANGSTROMS) OF 22-466 IN COMPLEX WITH THE CYCLOPENTAPEPTIDE INHIBITOR ARGADIN</scope>
    <scope>CATALYTIC ACTIVITY</scope>
</reference>
<reference key="10">
    <citation type="journal article" date="2007" name="Hum. Mutat.">
        <title>Type 1 Gaucher disease: null and hypomorphic novel chitotriosidase mutations-implications for diagnosis and therapeutic monitoring.</title>
        <authorList>
            <person name="Grace M.E."/>
            <person name="Balwani M."/>
            <person name="Nazarenko I."/>
            <person name="Prakash-Cheng A."/>
            <person name="Desnick R.J."/>
        </authorList>
    </citation>
    <scope>VARIANTS LYS-74 AND SER-102</scope>
</reference>
<reference key="11">
    <citation type="journal article" date="2009" name="FEBS J.">
        <title>Common G102S polymorphism in chitotriosidase differentially affects activity towards 4-methylumbelliferyl substrates.</title>
        <authorList>
            <person name="Bussink A.P."/>
            <person name="Verhoek M."/>
            <person name="Vreede J."/>
            <person name="Ghauharali-van der Vlugt K."/>
            <person name="Donker-Koopman W.E."/>
            <person name="Sprenger R.R."/>
            <person name="Hollak C.E."/>
            <person name="Aerts J.M."/>
            <person name="Boot R.G."/>
        </authorList>
    </citation>
    <scope>CHARACTERIZATION OF VARIANT SER-102</scope>
    <scope>SUBCELLULAR LOCATION</scope>
    <scope>CATALYTIC ACTIVITY</scope>
    <scope>GLYCOSYLATION AT ASN-100</scope>
</reference>
<dbReference type="EC" id="3.2.1.14"/>
<dbReference type="EMBL" id="U29615">
    <property type="protein sequence ID" value="AAC50246.1"/>
    <property type="molecule type" value="mRNA"/>
</dbReference>
<dbReference type="EMBL" id="U62662">
    <property type="protein sequence ID" value="AAG10644.1"/>
    <property type="molecule type" value="mRNA"/>
</dbReference>
<dbReference type="EMBL" id="AK055165">
    <property type="protein sequence ID" value="BAG51478.1"/>
    <property type="status" value="ALT_INIT"/>
    <property type="molecule type" value="mRNA"/>
</dbReference>
<dbReference type="EMBL" id="AC105940">
    <property type="status" value="NOT_ANNOTATED_CDS"/>
    <property type="molecule type" value="Genomic_DNA"/>
</dbReference>
<dbReference type="EMBL" id="AL359090">
    <property type="status" value="NOT_ANNOTATED_CDS"/>
    <property type="molecule type" value="Genomic_DNA"/>
</dbReference>
<dbReference type="EMBL" id="BC069614">
    <property type="protein sequence ID" value="AAH69614.1"/>
    <property type="molecule type" value="mRNA"/>
</dbReference>
<dbReference type="EMBL" id="BC103695">
    <property type="protein sequence ID" value="AAI03696.1"/>
    <property type="molecule type" value="mRNA"/>
</dbReference>
<dbReference type="EMBL" id="BC105680">
    <property type="protein sequence ID" value="AAI05681.1"/>
    <property type="molecule type" value="mRNA"/>
</dbReference>
<dbReference type="EMBL" id="BC105681">
    <property type="protein sequence ID" value="AAI05682.1"/>
    <property type="molecule type" value="mRNA"/>
</dbReference>
<dbReference type="EMBL" id="BC105682">
    <property type="protein sequence ID" value="AAI05683.1"/>
    <property type="molecule type" value="mRNA"/>
</dbReference>
<dbReference type="CCDS" id="CCDS1436.1">
    <molecule id="Q13231-1"/>
</dbReference>
<dbReference type="CCDS" id="CCDS58057.1">
    <molecule id="Q13231-4"/>
</dbReference>
<dbReference type="RefSeq" id="NP_001243054.2">
    <molecule id="Q13231-4"/>
    <property type="nucleotide sequence ID" value="NM_001256125.2"/>
</dbReference>
<dbReference type="RefSeq" id="NP_003456.1">
    <molecule id="Q13231-1"/>
    <property type="nucleotide sequence ID" value="NM_003465.3"/>
</dbReference>
<dbReference type="PDB" id="1GUV">
    <property type="method" value="X-ray"/>
    <property type="resolution" value="2.35 A"/>
    <property type="chains" value="A=22-387"/>
</dbReference>
<dbReference type="PDB" id="1HKI">
    <property type="method" value="X-ray"/>
    <property type="resolution" value="2.55 A"/>
    <property type="chains" value="A=22-386"/>
</dbReference>
<dbReference type="PDB" id="1HKJ">
    <property type="method" value="X-ray"/>
    <property type="resolution" value="2.60 A"/>
    <property type="chains" value="A=22-386"/>
</dbReference>
<dbReference type="PDB" id="1HKK">
    <property type="method" value="X-ray"/>
    <property type="resolution" value="1.85 A"/>
    <property type="chains" value="A=22-385"/>
</dbReference>
<dbReference type="PDB" id="1HKM">
    <property type="method" value="X-ray"/>
    <property type="resolution" value="2.55 A"/>
    <property type="chains" value="A=22-386"/>
</dbReference>
<dbReference type="PDB" id="1LG1">
    <property type="method" value="X-ray"/>
    <property type="resolution" value="2.78 A"/>
    <property type="chains" value="A=22-386"/>
</dbReference>
<dbReference type="PDB" id="1LG2">
    <property type="method" value="X-ray"/>
    <property type="resolution" value="2.10 A"/>
    <property type="chains" value="A=22-386"/>
</dbReference>
<dbReference type="PDB" id="1LQ0">
    <property type="method" value="X-ray"/>
    <property type="resolution" value="2.20 A"/>
    <property type="chains" value="A=22-386"/>
</dbReference>
<dbReference type="PDB" id="1WAW">
    <property type="method" value="X-ray"/>
    <property type="resolution" value="1.75 A"/>
    <property type="chains" value="A=22-466"/>
</dbReference>
<dbReference type="PDB" id="1WB0">
    <property type="method" value="X-ray"/>
    <property type="resolution" value="1.65 A"/>
    <property type="chains" value="A=22-466"/>
</dbReference>
<dbReference type="PDB" id="4WJX">
    <property type="method" value="X-ray"/>
    <property type="resolution" value="1.00 A"/>
    <property type="chains" value="A=22-387"/>
</dbReference>
<dbReference type="PDB" id="4WK9">
    <property type="method" value="X-ray"/>
    <property type="resolution" value="1.10 A"/>
    <property type="chains" value="A=22-387"/>
</dbReference>
<dbReference type="PDB" id="4WKA">
    <property type="method" value="X-ray"/>
    <property type="resolution" value="0.95 A"/>
    <property type="chains" value="A=22-386"/>
</dbReference>
<dbReference type="PDB" id="4WKF">
    <property type="method" value="X-ray"/>
    <property type="resolution" value="1.10 A"/>
    <property type="chains" value="A=22-387"/>
</dbReference>
<dbReference type="PDB" id="4WKH">
    <property type="method" value="X-ray"/>
    <property type="resolution" value="1.05 A"/>
    <property type="chains" value="A=22-387"/>
</dbReference>
<dbReference type="PDB" id="5HBF">
    <property type="method" value="X-ray"/>
    <property type="resolution" value="1.95 A"/>
    <property type="chains" value="A/B=1-466"/>
</dbReference>
<dbReference type="PDB" id="5NR8">
    <property type="method" value="X-ray"/>
    <property type="resolution" value="1.35 A"/>
    <property type="chains" value="A=22-387"/>
</dbReference>
<dbReference type="PDB" id="5NRA">
    <property type="method" value="X-ray"/>
    <property type="resolution" value="1.27 A"/>
    <property type="chains" value="A=22-387"/>
</dbReference>
<dbReference type="PDB" id="5NRF">
    <property type="method" value="X-ray"/>
    <property type="resolution" value="1.45 A"/>
    <property type="chains" value="A=22-387"/>
</dbReference>
<dbReference type="PDB" id="6JJR">
    <property type="method" value="X-ray"/>
    <property type="resolution" value="1.83 A"/>
    <property type="chains" value="A=22-396"/>
</dbReference>
<dbReference type="PDB" id="6JK6">
    <property type="method" value="X-ray"/>
    <property type="resolution" value="1.57 A"/>
    <property type="chains" value="A=22-396"/>
</dbReference>
<dbReference type="PDB" id="6SO0">
    <property type="method" value="NMR"/>
    <property type="chains" value="A=418-466"/>
</dbReference>
<dbReference type="PDB" id="6ZE8">
    <property type="method" value="X-ray"/>
    <property type="resolution" value="1.50 A"/>
    <property type="chains" value="A/B/C/D/E/F=22-386"/>
</dbReference>
<dbReference type="PDBsum" id="1GUV"/>
<dbReference type="PDBsum" id="1HKI"/>
<dbReference type="PDBsum" id="1HKJ"/>
<dbReference type="PDBsum" id="1HKK"/>
<dbReference type="PDBsum" id="1HKM"/>
<dbReference type="PDBsum" id="1LG1"/>
<dbReference type="PDBsum" id="1LG2"/>
<dbReference type="PDBsum" id="1LQ0"/>
<dbReference type="PDBsum" id="1WAW"/>
<dbReference type="PDBsum" id="1WB0"/>
<dbReference type="PDBsum" id="4WJX"/>
<dbReference type="PDBsum" id="4WK9"/>
<dbReference type="PDBsum" id="4WKA"/>
<dbReference type="PDBsum" id="4WKF"/>
<dbReference type="PDBsum" id="4WKH"/>
<dbReference type="PDBsum" id="5HBF"/>
<dbReference type="PDBsum" id="5NR8"/>
<dbReference type="PDBsum" id="5NRA"/>
<dbReference type="PDBsum" id="5NRF"/>
<dbReference type="PDBsum" id="6JJR"/>
<dbReference type="PDBsum" id="6JK6"/>
<dbReference type="PDBsum" id="6SO0"/>
<dbReference type="PDBsum" id="6ZE8"/>
<dbReference type="SMR" id="Q13231"/>
<dbReference type="BioGRID" id="107542">
    <property type="interactions" value="13"/>
</dbReference>
<dbReference type="FunCoup" id="Q13231">
    <property type="interactions" value="112"/>
</dbReference>
<dbReference type="IntAct" id="Q13231">
    <property type="interactions" value="10"/>
</dbReference>
<dbReference type="STRING" id="9606.ENSP00000356198"/>
<dbReference type="BindingDB" id="Q13231"/>
<dbReference type="ChEMBL" id="CHEMBL3080"/>
<dbReference type="DrugBank" id="DB03539">
    <property type="generic name" value="2-(Acetylamino)-2-Deoxy-6-O-Methyl-Alpha-D-Allopyranose"/>
</dbReference>
<dbReference type="DrugBank" id="DB03109">
    <property type="generic name" value="2-acetylamino-2-deoxy-b-D-allopyranose"/>
</dbReference>
<dbReference type="DrugBank" id="DB04404">
    <property type="generic name" value="Allosamizoline"/>
</dbReference>
<dbReference type="DrugBank" id="DB04350">
    <property type="generic name" value="Argadin"/>
</dbReference>
<dbReference type="DrugBank" id="DB03632">
    <property type="generic name" value="Argifin"/>
</dbReference>
<dbReference type="GuidetoPHARMACOLOGY" id="3187"/>
<dbReference type="CAZy" id="CBM14">
    <property type="family name" value="Carbohydrate-Binding Module Family 14"/>
</dbReference>
<dbReference type="CAZy" id="GH18">
    <property type="family name" value="Glycoside Hydrolase Family 18"/>
</dbReference>
<dbReference type="GlyCosmos" id="Q13231">
    <property type="glycosylation" value="2 sites, 1 glycan"/>
</dbReference>
<dbReference type="GlyGen" id="Q13231">
    <property type="glycosylation" value="2 sites, 1 O-linked glycan (1 site)"/>
</dbReference>
<dbReference type="iPTMnet" id="Q13231"/>
<dbReference type="PhosphoSitePlus" id="Q13231"/>
<dbReference type="BioMuta" id="CHIT1"/>
<dbReference type="DMDM" id="37999493"/>
<dbReference type="MassIVE" id="Q13231"/>
<dbReference type="PaxDb" id="9606-ENSP00000356198"/>
<dbReference type="PeptideAtlas" id="Q13231"/>
<dbReference type="ProteomicsDB" id="59236">
    <molecule id="Q13231-1"/>
</dbReference>
<dbReference type="ProteomicsDB" id="59237">
    <molecule id="Q13231-2"/>
</dbReference>
<dbReference type="ProteomicsDB" id="59238">
    <molecule id="Q13231-3"/>
</dbReference>
<dbReference type="Antibodypedia" id="2441">
    <property type="antibodies" value="244 antibodies from 33 providers"/>
</dbReference>
<dbReference type="DNASU" id="1118"/>
<dbReference type="Ensembl" id="ENST00000255427.7">
    <molecule id="Q13231-4"/>
    <property type="protein sequence ID" value="ENSP00000255427.3"/>
    <property type="gene ID" value="ENSG00000133063.16"/>
</dbReference>
<dbReference type="Ensembl" id="ENST00000367229.6">
    <molecule id="Q13231-1"/>
    <property type="protein sequence ID" value="ENSP00000356198.1"/>
    <property type="gene ID" value="ENSG00000133063.16"/>
</dbReference>
<dbReference type="Ensembl" id="ENST00000491855.5">
    <molecule id="Q13231-2"/>
    <property type="protein sequence ID" value="ENSP00000423778.1"/>
    <property type="gene ID" value="ENSG00000133063.16"/>
</dbReference>
<dbReference type="GeneID" id="1118"/>
<dbReference type="KEGG" id="hsa:1118"/>
<dbReference type="MANE-Select" id="ENST00000367229.6">
    <property type="protein sequence ID" value="ENSP00000356198.1"/>
    <property type="RefSeq nucleotide sequence ID" value="NM_003465.3"/>
    <property type="RefSeq protein sequence ID" value="NP_003456.1"/>
</dbReference>
<dbReference type="UCSC" id="uc001gzn.3">
    <molecule id="Q13231-1"/>
    <property type="organism name" value="human"/>
</dbReference>
<dbReference type="AGR" id="HGNC:1936"/>
<dbReference type="CTD" id="1118"/>
<dbReference type="DisGeNET" id="1118"/>
<dbReference type="GeneCards" id="CHIT1"/>
<dbReference type="HGNC" id="HGNC:1936">
    <property type="gene designation" value="CHIT1"/>
</dbReference>
<dbReference type="HPA" id="ENSG00000133063">
    <property type="expression patterns" value="Tissue enhanced (bone marrow, lung, lymphoid tissue)"/>
</dbReference>
<dbReference type="MalaCards" id="CHIT1"/>
<dbReference type="MIM" id="600031">
    <property type="type" value="gene"/>
</dbReference>
<dbReference type="MIM" id="614122">
    <property type="type" value="phenotype"/>
</dbReference>
<dbReference type="neXtProt" id="NX_Q13231"/>
<dbReference type="OpenTargets" id="ENSG00000133063"/>
<dbReference type="PharmGKB" id="PA26467"/>
<dbReference type="VEuPathDB" id="HostDB:ENSG00000133063"/>
<dbReference type="eggNOG" id="KOG2806">
    <property type="taxonomic scope" value="Eukaryota"/>
</dbReference>
<dbReference type="GeneTree" id="ENSGT00940000161149"/>
<dbReference type="HOGENOM" id="CLU_002833_3_1_1"/>
<dbReference type="InParanoid" id="Q13231"/>
<dbReference type="OMA" id="NPMTYDF"/>
<dbReference type="OrthoDB" id="76388at2759"/>
<dbReference type="PAN-GO" id="Q13231">
    <property type="GO annotations" value="4 GO annotations based on evolutionary models"/>
</dbReference>
<dbReference type="PhylomeDB" id="Q13231"/>
<dbReference type="TreeFam" id="TF315610"/>
<dbReference type="PathwayCommons" id="Q13231"/>
<dbReference type="Reactome" id="R-HSA-189085">
    <property type="pathway name" value="Digestion of dietary carbohydrate"/>
</dbReference>
<dbReference type="Reactome" id="R-HSA-6798695">
    <property type="pathway name" value="Neutrophil degranulation"/>
</dbReference>
<dbReference type="SignaLink" id="Q13231"/>
<dbReference type="BioGRID-ORCS" id="1118">
    <property type="hits" value="7 hits in 1149 CRISPR screens"/>
</dbReference>
<dbReference type="ChiTaRS" id="CHIT1">
    <property type="organism name" value="human"/>
</dbReference>
<dbReference type="EvolutionaryTrace" id="Q13231"/>
<dbReference type="GenomeRNAi" id="1118"/>
<dbReference type="Pharos" id="Q13231">
    <property type="development level" value="Tchem"/>
</dbReference>
<dbReference type="PRO" id="PR:Q13231"/>
<dbReference type="Proteomes" id="UP000005640">
    <property type="component" value="Chromosome 1"/>
</dbReference>
<dbReference type="RNAct" id="Q13231">
    <property type="molecule type" value="protein"/>
</dbReference>
<dbReference type="Bgee" id="ENSG00000133063">
    <property type="expression patterns" value="Expressed in bone marrow and 109 other cell types or tissues"/>
</dbReference>
<dbReference type="ExpressionAtlas" id="Q13231">
    <property type="expression patterns" value="baseline and differential"/>
</dbReference>
<dbReference type="GO" id="GO:0005576">
    <property type="term" value="C:extracellular region"/>
    <property type="evidence" value="ECO:0000318"/>
    <property type="project" value="GO_Central"/>
</dbReference>
<dbReference type="GO" id="GO:0005615">
    <property type="term" value="C:extracellular space"/>
    <property type="evidence" value="ECO:0000314"/>
    <property type="project" value="UniProtKB"/>
</dbReference>
<dbReference type="GO" id="GO:0005764">
    <property type="term" value="C:lysosome"/>
    <property type="evidence" value="ECO:0007669"/>
    <property type="project" value="UniProtKB-SubCell"/>
</dbReference>
<dbReference type="GO" id="GO:0035580">
    <property type="term" value="C:specific granule lumen"/>
    <property type="evidence" value="ECO:0000304"/>
    <property type="project" value="Reactome"/>
</dbReference>
<dbReference type="GO" id="GO:1904724">
    <property type="term" value="C:tertiary granule lumen"/>
    <property type="evidence" value="ECO:0000304"/>
    <property type="project" value="Reactome"/>
</dbReference>
<dbReference type="GO" id="GO:0008061">
    <property type="term" value="F:chitin binding"/>
    <property type="evidence" value="ECO:0000304"/>
    <property type="project" value="UniProtKB"/>
</dbReference>
<dbReference type="GO" id="GO:0004568">
    <property type="term" value="F:chitinase activity"/>
    <property type="evidence" value="ECO:0000314"/>
    <property type="project" value="UniProtKB"/>
</dbReference>
<dbReference type="GO" id="GO:0008843">
    <property type="term" value="F:endochitinase activity"/>
    <property type="evidence" value="ECO:0000314"/>
    <property type="project" value="UniProtKB"/>
</dbReference>
<dbReference type="GO" id="GO:0004553">
    <property type="term" value="F:hydrolase activity, hydrolyzing O-glycosyl compounds"/>
    <property type="evidence" value="ECO:0000304"/>
    <property type="project" value="Reactome"/>
</dbReference>
<dbReference type="GO" id="GO:0006032">
    <property type="term" value="P:chitin catabolic process"/>
    <property type="evidence" value="ECO:0000314"/>
    <property type="project" value="UniProtKB"/>
</dbReference>
<dbReference type="GO" id="GO:0006955">
    <property type="term" value="P:immune response"/>
    <property type="evidence" value="ECO:0000303"/>
    <property type="project" value="UniProtKB"/>
</dbReference>
<dbReference type="GO" id="GO:0000272">
    <property type="term" value="P:polysaccharide catabolic process"/>
    <property type="evidence" value="ECO:0007669"/>
    <property type="project" value="UniProtKB-KW"/>
</dbReference>
<dbReference type="GO" id="GO:0044245">
    <property type="term" value="P:polysaccharide digestion"/>
    <property type="evidence" value="ECO:0000304"/>
    <property type="project" value="Reactome"/>
</dbReference>
<dbReference type="GO" id="GO:0009617">
    <property type="term" value="P:response to bacterium"/>
    <property type="evidence" value="ECO:0000304"/>
    <property type="project" value="ProtInc"/>
</dbReference>
<dbReference type="CDD" id="cd02872">
    <property type="entry name" value="GH18_chitolectin_chitotriosidase"/>
    <property type="match status" value="1"/>
</dbReference>
<dbReference type="FunFam" id="3.20.20.80:FF:000081">
    <property type="entry name" value="Chitinase 1"/>
    <property type="match status" value="1"/>
</dbReference>
<dbReference type="FunFam" id="3.20.20.80:FF:000220">
    <property type="entry name" value="Chitotriosidase-1"/>
    <property type="match status" value="1"/>
</dbReference>
<dbReference type="Gene3D" id="3.20.20.80">
    <property type="entry name" value="Glycosidases"/>
    <property type="match status" value="2"/>
</dbReference>
<dbReference type="InterPro" id="IPR002557">
    <property type="entry name" value="Chitin-bd_dom"/>
</dbReference>
<dbReference type="InterPro" id="IPR036508">
    <property type="entry name" value="Chitin-bd_dom_sf"/>
</dbReference>
<dbReference type="InterPro" id="IPR011583">
    <property type="entry name" value="Chitinase_II/V-like_cat"/>
</dbReference>
<dbReference type="InterPro" id="IPR029070">
    <property type="entry name" value="Chitinase_insertion_sf"/>
</dbReference>
<dbReference type="InterPro" id="IPR001223">
    <property type="entry name" value="Glyco_hydro18_cat"/>
</dbReference>
<dbReference type="InterPro" id="IPR001579">
    <property type="entry name" value="Glyco_hydro_18_chit_AS"/>
</dbReference>
<dbReference type="InterPro" id="IPR017853">
    <property type="entry name" value="Glycoside_hydrolase_SF"/>
</dbReference>
<dbReference type="InterPro" id="IPR050314">
    <property type="entry name" value="Glycosyl_Hydrlase_18"/>
</dbReference>
<dbReference type="PANTHER" id="PTHR11177">
    <property type="entry name" value="CHITINASE"/>
    <property type="match status" value="1"/>
</dbReference>
<dbReference type="PANTHER" id="PTHR11177:SF248">
    <property type="entry name" value="CHITOTRIOSIDASE-1"/>
    <property type="match status" value="1"/>
</dbReference>
<dbReference type="Pfam" id="PF01607">
    <property type="entry name" value="CBM_14"/>
    <property type="match status" value="1"/>
</dbReference>
<dbReference type="Pfam" id="PF00704">
    <property type="entry name" value="Glyco_hydro_18"/>
    <property type="match status" value="1"/>
</dbReference>
<dbReference type="SMART" id="SM00494">
    <property type="entry name" value="ChtBD2"/>
    <property type="match status" value="1"/>
</dbReference>
<dbReference type="SMART" id="SM00636">
    <property type="entry name" value="Glyco_18"/>
    <property type="match status" value="1"/>
</dbReference>
<dbReference type="SUPFAM" id="SSF51445">
    <property type="entry name" value="(Trans)glycosidases"/>
    <property type="match status" value="1"/>
</dbReference>
<dbReference type="SUPFAM" id="SSF54556">
    <property type="entry name" value="Chitinase insertion domain"/>
    <property type="match status" value="1"/>
</dbReference>
<dbReference type="SUPFAM" id="SSF57625">
    <property type="entry name" value="Invertebrate chitin-binding proteins"/>
    <property type="match status" value="1"/>
</dbReference>
<dbReference type="PROSITE" id="PS50940">
    <property type="entry name" value="CHIT_BIND_II"/>
    <property type="match status" value="1"/>
</dbReference>
<dbReference type="PROSITE" id="PS01095">
    <property type="entry name" value="GH18_1"/>
    <property type="match status" value="1"/>
</dbReference>
<dbReference type="PROSITE" id="PS51910">
    <property type="entry name" value="GH18_2"/>
    <property type="match status" value="1"/>
</dbReference>
<evidence type="ECO:0000255" key="1">
    <source>
        <dbReference type="PROSITE-ProRule" id="PRU00144"/>
    </source>
</evidence>
<evidence type="ECO:0000255" key="2">
    <source>
        <dbReference type="PROSITE-ProRule" id="PRU01258"/>
    </source>
</evidence>
<evidence type="ECO:0000256" key="3">
    <source>
        <dbReference type="SAM" id="MobiDB-lite"/>
    </source>
</evidence>
<evidence type="ECO:0000269" key="4">
    <source>
    </source>
</evidence>
<evidence type="ECO:0000269" key="5">
    <source>
    </source>
</evidence>
<evidence type="ECO:0000269" key="6">
    <source>
    </source>
</evidence>
<evidence type="ECO:0000269" key="7">
    <source>
    </source>
</evidence>
<evidence type="ECO:0000269" key="8">
    <source>
    </source>
</evidence>
<evidence type="ECO:0000269" key="9">
    <source>
    </source>
</evidence>
<evidence type="ECO:0000269" key="10">
    <source>
    </source>
</evidence>
<evidence type="ECO:0000269" key="11">
    <source>
    </source>
</evidence>
<evidence type="ECO:0000269" key="12">
    <source>
    </source>
</evidence>
<evidence type="ECO:0000269" key="13">
    <source>
    </source>
</evidence>
<evidence type="ECO:0000303" key="14">
    <source>
    </source>
</evidence>
<evidence type="ECO:0000303" key="15">
    <source>
    </source>
</evidence>
<evidence type="ECO:0000305" key="16"/>
<evidence type="ECO:0007829" key="17">
    <source>
        <dbReference type="PDB" id="1HKI"/>
    </source>
</evidence>
<evidence type="ECO:0007829" key="18">
    <source>
        <dbReference type="PDB" id="4WKA"/>
    </source>
</evidence>
<evidence type="ECO:0007829" key="19">
    <source>
        <dbReference type="PDB" id="4WKH"/>
    </source>
</evidence>
<evidence type="ECO:0007829" key="20">
    <source>
        <dbReference type="PDB" id="5HBF"/>
    </source>
</evidence>
<comment type="function">
    <text evidence="11 12">Degrades chitin, chitotriose and chitobiose. May participate in the defense against nematodes and other pathogens. Isoform 3 has no enzymatic activity.</text>
</comment>
<comment type="catalytic activity">
    <reaction evidence="8 10 12">
        <text>Random endo-hydrolysis of N-acetyl-beta-D-glucosaminide (1-&gt;4)-beta-linkages in chitin and chitodextrins.</text>
        <dbReference type="EC" id="3.2.1.14"/>
    </reaction>
</comment>
<comment type="subunit">
    <text evidence="4 5 8">Monomer.</text>
</comment>
<comment type="interaction">
    <interactant intactId="EBI-20853463">
        <id>Q13231</id>
    </interactant>
    <interactant intactId="EBI-301246">
        <id>P40337</id>
        <label>VHL</label>
    </interactant>
    <organismsDiffer>false</organismsDiffer>
    <experiments>2</experiments>
</comment>
<comment type="subcellular location">
    <subcellularLocation>
        <location>Secreted</location>
    </subcellularLocation>
    <subcellularLocation>
        <location>Lysosome</location>
    </subcellularLocation>
    <text>A small proportion is lysosomal.</text>
</comment>
<comment type="alternative products">
    <event type="alternative splicing"/>
    <isoform>
        <id>Q13231-1</id>
        <name>1</name>
        <sequence type="displayed"/>
    </isoform>
    <isoform>
        <id>Q13231-2</id>
        <name>2</name>
        <sequence type="described" ref="VSP_008631 VSP_008632"/>
    </isoform>
    <isoform>
        <id>Q13231-3</id>
        <name>3</name>
        <sequence type="described" ref="VSP_008633"/>
    </isoform>
    <isoform>
        <id>Q13231-4</id>
        <name>4</name>
        <sequence type="described" ref="VSP_044816"/>
    </isoform>
</comment>
<comment type="tissue specificity">
    <text evidence="12">Detected in spleen. Secreted by cultured macrophages.</text>
</comment>
<comment type="polymorphism">
    <text evidence="13">A 24 bp duplication in exon 10 leads to the activation of an alternative splice site and the production of an inactive protein resulting in chitotriosidase deficiency [MIM:614122]. About 6% of the population are deficient for CHIT1 activity, while 35% are carriers and show reduced enzyme levels. People with CHIT1 deficiency appear perfectly healthy.</text>
</comment>
<comment type="miscellaneous">
    <text>Very high plasma levels of CHIT1 are found in patients with Gaucher disease type 1 (GD I). Can be used as diagnostic aid and to evaluate the success of treatment that brings levels back to normal.</text>
</comment>
<comment type="miscellaneous">
    <molecule>Isoform 3</molecule>
    <text evidence="16">Duplication of 24 bp in exon 10 leads to the use of a cryptic splice site. The normal splice site is still present but not used.</text>
</comment>
<comment type="similarity">
    <text evidence="16">Belongs to the glycosyl hydrolase 18 family. Chitinase class II subfamily.</text>
</comment>
<comment type="sequence caution" evidence="16">
    <conflict type="erroneous initiation">
        <sequence resource="EMBL-CDS" id="BAG51478"/>
    </conflict>
    <text>Extended N-terminus.</text>
</comment>
<accession>Q13231</accession>
<accession>B3KNW6</accession>
<accession>J3KN09</accession>
<accession>Q0VGG5</accession>
<accession>Q0VGG6</accession>
<accession>Q3ZAR1</accession>
<accession>Q6ISC2</accession>
<accession>Q9H3V8</accession>
<accession>Q9UDJ8</accession>
<proteinExistence type="evidence at protein level"/>
<protein>
    <recommendedName>
        <fullName>Chitotriosidase-1</fullName>
        <ecNumber>3.2.1.14</ecNumber>
    </recommendedName>
    <alternativeName>
        <fullName>Chitinase-1</fullName>
    </alternativeName>
</protein>
<name>CHIT1_HUMAN</name>